<organism>
    <name type="scientific">Photorhabdus laumondii subsp. laumondii (strain DSM 15139 / CIP 105565 / TT01)</name>
    <name type="common">Photorhabdus luminescens subsp. laumondii</name>
    <dbReference type="NCBI Taxonomy" id="243265"/>
    <lineage>
        <taxon>Bacteria</taxon>
        <taxon>Pseudomonadati</taxon>
        <taxon>Pseudomonadota</taxon>
        <taxon>Gammaproteobacteria</taxon>
        <taxon>Enterobacterales</taxon>
        <taxon>Morganellaceae</taxon>
        <taxon>Photorhabdus</taxon>
    </lineage>
</organism>
<evidence type="ECO:0000255" key="1">
    <source>
        <dbReference type="HAMAP-Rule" id="MF_00444"/>
    </source>
</evidence>
<evidence type="ECO:0007829" key="2">
    <source>
        <dbReference type="PDB" id="8R05"/>
    </source>
</evidence>
<feature type="chain" id="PRO_0000179612" description="ATP-dependent Clp protease proteolytic subunit">
    <location>
        <begin position="1"/>
        <end position="207"/>
    </location>
</feature>
<feature type="active site" description="Nucleophile" evidence="1">
    <location>
        <position position="111"/>
    </location>
</feature>
<feature type="active site" evidence="1">
    <location>
        <position position="136"/>
    </location>
</feature>
<feature type="strand" evidence="2">
    <location>
        <begin position="19"/>
        <end position="24"/>
    </location>
</feature>
<feature type="strand" evidence="2">
    <location>
        <begin position="27"/>
        <end position="32"/>
    </location>
</feature>
<feature type="helix" evidence="2">
    <location>
        <begin position="33"/>
        <end position="38"/>
    </location>
</feature>
<feature type="turn" evidence="2">
    <location>
        <begin position="39"/>
        <end position="41"/>
    </location>
</feature>
<feature type="strand" evidence="2">
    <location>
        <begin position="42"/>
        <end position="49"/>
    </location>
</feature>
<feature type="helix" evidence="2">
    <location>
        <begin position="51"/>
        <end position="67"/>
    </location>
</feature>
<feature type="strand" evidence="2">
    <location>
        <begin position="69"/>
        <end position="71"/>
    </location>
</feature>
<feature type="strand" evidence="2">
    <location>
        <begin position="73"/>
        <end position="79"/>
    </location>
</feature>
<feature type="helix" evidence="2">
    <location>
        <begin position="84"/>
        <end position="96"/>
    </location>
</feature>
<feature type="strand" evidence="2">
    <location>
        <begin position="97"/>
        <end position="99"/>
    </location>
</feature>
<feature type="strand" evidence="2">
    <location>
        <begin position="101"/>
        <end position="110"/>
    </location>
</feature>
<feature type="helix" evidence="2">
    <location>
        <begin position="112"/>
        <end position="118"/>
    </location>
</feature>
<feature type="strand" evidence="2">
    <location>
        <begin position="125"/>
        <end position="127"/>
    </location>
</feature>
<feature type="strand" evidence="2">
    <location>
        <begin position="132"/>
        <end position="135"/>
    </location>
</feature>
<feature type="strand" evidence="2">
    <location>
        <begin position="139"/>
        <end position="145"/>
    </location>
</feature>
<feature type="helix" evidence="2">
    <location>
        <begin position="146"/>
        <end position="171"/>
    </location>
</feature>
<feature type="helix" evidence="2">
    <location>
        <begin position="175"/>
        <end position="181"/>
    </location>
</feature>
<feature type="strand" evidence="2">
    <location>
        <begin position="186"/>
        <end position="188"/>
    </location>
</feature>
<feature type="helix" evidence="2">
    <location>
        <begin position="190"/>
        <end position="195"/>
    </location>
</feature>
<feature type="strand" evidence="2">
    <location>
        <begin position="198"/>
        <end position="202"/>
    </location>
</feature>
<dbReference type="EC" id="3.4.21.92" evidence="1"/>
<dbReference type="EMBL" id="BX571872">
    <property type="protein sequence ID" value="CAE16241.1"/>
    <property type="molecule type" value="Genomic_DNA"/>
</dbReference>
<dbReference type="RefSeq" id="WP_011148008.1">
    <property type="nucleotide sequence ID" value="NC_005126.1"/>
</dbReference>
<dbReference type="PDB" id="8R05">
    <property type="method" value="X-ray"/>
    <property type="resolution" value="2.50 A"/>
    <property type="chains" value="A/B/C/D/E/F/G/H/I/J/K/L/M/N=2-207"/>
</dbReference>
<dbReference type="PDBsum" id="8R05"/>
<dbReference type="SMR" id="Q7N0L3"/>
<dbReference type="STRING" id="243265.plu3869"/>
<dbReference type="MEROPS" id="S14.001"/>
<dbReference type="GeneID" id="48850100"/>
<dbReference type="KEGG" id="plu:plu3869"/>
<dbReference type="eggNOG" id="COG0740">
    <property type="taxonomic scope" value="Bacteria"/>
</dbReference>
<dbReference type="HOGENOM" id="CLU_058707_3_2_6"/>
<dbReference type="OrthoDB" id="9802800at2"/>
<dbReference type="Proteomes" id="UP000002514">
    <property type="component" value="Chromosome"/>
</dbReference>
<dbReference type="GO" id="GO:0005737">
    <property type="term" value="C:cytoplasm"/>
    <property type="evidence" value="ECO:0007669"/>
    <property type="project" value="UniProtKB-SubCell"/>
</dbReference>
<dbReference type="GO" id="GO:0009368">
    <property type="term" value="C:endopeptidase Clp complex"/>
    <property type="evidence" value="ECO:0007669"/>
    <property type="project" value="TreeGrafter"/>
</dbReference>
<dbReference type="GO" id="GO:0004176">
    <property type="term" value="F:ATP-dependent peptidase activity"/>
    <property type="evidence" value="ECO:0007669"/>
    <property type="project" value="InterPro"/>
</dbReference>
<dbReference type="GO" id="GO:0051117">
    <property type="term" value="F:ATPase binding"/>
    <property type="evidence" value="ECO:0007669"/>
    <property type="project" value="TreeGrafter"/>
</dbReference>
<dbReference type="GO" id="GO:0004252">
    <property type="term" value="F:serine-type endopeptidase activity"/>
    <property type="evidence" value="ECO:0007669"/>
    <property type="project" value="UniProtKB-UniRule"/>
</dbReference>
<dbReference type="GO" id="GO:0006515">
    <property type="term" value="P:protein quality control for misfolded or incompletely synthesized proteins"/>
    <property type="evidence" value="ECO:0007669"/>
    <property type="project" value="TreeGrafter"/>
</dbReference>
<dbReference type="CDD" id="cd07017">
    <property type="entry name" value="S14_ClpP_2"/>
    <property type="match status" value="1"/>
</dbReference>
<dbReference type="FunFam" id="3.90.226.10:FF:000001">
    <property type="entry name" value="ATP-dependent Clp protease proteolytic subunit"/>
    <property type="match status" value="1"/>
</dbReference>
<dbReference type="Gene3D" id="3.90.226.10">
    <property type="entry name" value="2-enoyl-CoA Hydratase, Chain A, domain 1"/>
    <property type="match status" value="1"/>
</dbReference>
<dbReference type="HAMAP" id="MF_00444">
    <property type="entry name" value="ClpP"/>
    <property type="match status" value="1"/>
</dbReference>
<dbReference type="InterPro" id="IPR001907">
    <property type="entry name" value="ClpP"/>
</dbReference>
<dbReference type="InterPro" id="IPR029045">
    <property type="entry name" value="ClpP/crotonase-like_dom_sf"/>
</dbReference>
<dbReference type="InterPro" id="IPR023562">
    <property type="entry name" value="ClpP/TepA"/>
</dbReference>
<dbReference type="InterPro" id="IPR033135">
    <property type="entry name" value="ClpP_His_AS"/>
</dbReference>
<dbReference type="InterPro" id="IPR018215">
    <property type="entry name" value="ClpP_Ser_AS"/>
</dbReference>
<dbReference type="NCBIfam" id="TIGR00493">
    <property type="entry name" value="clpP"/>
    <property type="match status" value="1"/>
</dbReference>
<dbReference type="NCBIfam" id="NF001368">
    <property type="entry name" value="PRK00277.1"/>
    <property type="match status" value="1"/>
</dbReference>
<dbReference type="NCBIfam" id="NF009205">
    <property type="entry name" value="PRK12553.1"/>
    <property type="match status" value="1"/>
</dbReference>
<dbReference type="PANTHER" id="PTHR10381">
    <property type="entry name" value="ATP-DEPENDENT CLP PROTEASE PROTEOLYTIC SUBUNIT"/>
    <property type="match status" value="1"/>
</dbReference>
<dbReference type="PANTHER" id="PTHR10381:SF70">
    <property type="entry name" value="ATP-DEPENDENT CLP PROTEASE PROTEOLYTIC SUBUNIT"/>
    <property type="match status" value="1"/>
</dbReference>
<dbReference type="Pfam" id="PF00574">
    <property type="entry name" value="CLP_protease"/>
    <property type="match status" value="1"/>
</dbReference>
<dbReference type="PRINTS" id="PR00127">
    <property type="entry name" value="CLPPROTEASEP"/>
</dbReference>
<dbReference type="SUPFAM" id="SSF52096">
    <property type="entry name" value="ClpP/crotonase"/>
    <property type="match status" value="1"/>
</dbReference>
<dbReference type="PROSITE" id="PS00382">
    <property type="entry name" value="CLP_PROTEASE_HIS"/>
    <property type="match status" value="1"/>
</dbReference>
<dbReference type="PROSITE" id="PS00381">
    <property type="entry name" value="CLP_PROTEASE_SER"/>
    <property type="match status" value="1"/>
</dbReference>
<reference key="1">
    <citation type="journal article" date="2003" name="Nat. Biotechnol.">
        <title>The genome sequence of the entomopathogenic bacterium Photorhabdus luminescens.</title>
        <authorList>
            <person name="Duchaud E."/>
            <person name="Rusniok C."/>
            <person name="Frangeul L."/>
            <person name="Buchrieser C."/>
            <person name="Givaudan A."/>
            <person name="Taourit S."/>
            <person name="Bocs S."/>
            <person name="Boursaux-Eude C."/>
            <person name="Chandler M."/>
            <person name="Charles J.-F."/>
            <person name="Dassa E."/>
            <person name="Derose R."/>
            <person name="Derzelle S."/>
            <person name="Freyssinet G."/>
            <person name="Gaudriault S."/>
            <person name="Medigue C."/>
            <person name="Lanois A."/>
            <person name="Powell K."/>
            <person name="Siguier P."/>
            <person name="Vincent R."/>
            <person name="Wingate V."/>
            <person name="Zouine M."/>
            <person name="Glaser P."/>
            <person name="Boemare N."/>
            <person name="Danchin A."/>
            <person name="Kunst F."/>
        </authorList>
    </citation>
    <scope>NUCLEOTIDE SEQUENCE [LARGE SCALE GENOMIC DNA]</scope>
    <source>
        <strain>DSM 15139 / CIP 105565 / TT01</strain>
    </source>
</reference>
<keyword id="KW-0002">3D-structure</keyword>
<keyword id="KW-0963">Cytoplasm</keyword>
<keyword id="KW-0378">Hydrolase</keyword>
<keyword id="KW-0645">Protease</keyword>
<keyword id="KW-1185">Reference proteome</keyword>
<keyword id="KW-0720">Serine protease</keyword>
<proteinExistence type="evidence at protein level"/>
<accession>Q7N0L3</accession>
<gene>
    <name evidence="1" type="primary">clpP</name>
    <name type="ordered locus">plu3869</name>
</gene>
<sequence>MSYSDKRDQYAPHMALVPMVVEQTTRGERSYDIYSRLLKERIIFLTGQVEDHMANLVAAQMLFLEAENPEKDIFLYINSPGGVITAGMSIYDTMQFIKPDVSTICMGQACSMGAFLLTAGAKGKRICLPNSRVMIHQPLGGFQGQATDIEIHAQEILKVKSRMNELMAKHTGRPIEEIAKDTERDRFLSADEAVEYGLVDKIFTHRD</sequence>
<name>CLPP_PHOLL</name>
<comment type="function">
    <text evidence="1">Cleaves peptides in various proteins in a process that requires ATP hydrolysis. Has a chymotrypsin-like activity. Plays a major role in the degradation of misfolded proteins.</text>
</comment>
<comment type="catalytic activity">
    <reaction evidence="1">
        <text>Hydrolysis of proteins to small peptides in the presence of ATP and magnesium. alpha-casein is the usual test substrate. In the absence of ATP, only oligopeptides shorter than five residues are hydrolyzed (such as succinyl-Leu-Tyr-|-NHMec, and Leu-Tyr-Leu-|-Tyr-Trp, in which cleavage of the -Tyr-|-Leu- and -Tyr-|-Trp bonds also occurs).</text>
        <dbReference type="EC" id="3.4.21.92"/>
    </reaction>
</comment>
<comment type="subunit">
    <text evidence="1">Fourteen ClpP subunits assemble into 2 heptameric rings which stack back to back to give a disk-like structure with a central cavity, resembling the structure of eukaryotic proteasomes.</text>
</comment>
<comment type="subcellular location">
    <subcellularLocation>
        <location evidence="1">Cytoplasm</location>
    </subcellularLocation>
</comment>
<comment type="similarity">
    <text evidence="1">Belongs to the peptidase S14 family.</text>
</comment>
<protein>
    <recommendedName>
        <fullName evidence="1">ATP-dependent Clp protease proteolytic subunit</fullName>
        <ecNumber evidence="1">3.4.21.92</ecNumber>
    </recommendedName>
    <alternativeName>
        <fullName evidence="1">Endopeptidase Clp</fullName>
    </alternativeName>
</protein>